<sequence length="284" mass="31316">MKKIAIFAKVHDPRCVGIAEELVEWLLARGLSPLVEPHLAKHISCSYTAKRDDIPEQADLVVVLGGDGTLISVARLVGDRQVPILGVNLGSLGFLTEITLTEMYPALERCLKGDYEVSERMMLRVSLHRGGAEIEGRQVLNDVVINKGALARIIDLETEVDGRYLTTFKADGLIISTPTGSTGYSLSANGPIIHPQLDCLVITPICPHTLTNRPIVVSGDALITISLQSVNEDVFLTLDGQVGFEVKHGDQIRIQRAERQTRLVQSRSKDYFEVLRTKLKWGER</sequence>
<dbReference type="EC" id="2.7.1.23" evidence="1"/>
<dbReference type="EMBL" id="CP001390">
    <property type="protein sequence ID" value="ACM21804.1"/>
    <property type="molecule type" value="Genomic_DNA"/>
</dbReference>
<dbReference type="RefSeq" id="WP_012648532.1">
    <property type="nucleotide sequence ID" value="NC_011979.1"/>
</dbReference>
<dbReference type="SMR" id="B9M5P5"/>
<dbReference type="STRING" id="316067.Geob_3461"/>
<dbReference type="KEGG" id="geo:Geob_3461"/>
<dbReference type="eggNOG" id="COG0061">
    <property type="taxonomic scope" value="Bacteria"/>
</dbReference>
<dbReference type="HOGENOM" id="CLU_008831_0_1_7"/>
<dbReference type="OrthoDB" id="9774737at2"/>
<dbReference type="Proteomes" id="UP000007721">
    <property type="component" value="Chromosome"/>
</dbReference>
<dbReference type="GO" id="GO:0005737">
    <property type="term" value="C:cytoplasm"/>
    <property type="evidence" value="ECO:0007669"/>
    <property type="project" value="UniProtKB-SubCell"/>
</dbReference>
<dbReference type="GO" id="GO:0005524">
    <property type="term" value="F:ATP binding"/>
    <property type="evidence" value="ECO:0007669"/>
    <property type="project" value="UniProtKB-KW"/>
</dbReference>
<dbReference type="GO" id="GO:0046872">
    <property type="term" value="F:metal ion binding"/>
    <property type="evidence" value="ECO:0007669"/>
    <property type="project" value="UniProtKB-UniRule"/>
</dbReference>
<dbReference type="GO" id="GO:0051287">
    <property type="term" value="F:NAD binding"/>
    <property type="evidence" value="ECO:0007669"/>
    <property type="project" value="UniProtKB-ARBA"/>
</dbReference>
<dbReference type="GO" id="GO:0003951">
    <property type="term" value="F:NAD+ kinase activity"/>
    <property type="evidence" value="ECO:0007669"/>
    <property type="project" value="UniProtKB-UniRule"/>
</dbReference>
<dbReference type="GO" id="GO:0019674">
    <property type="term" value="P:NAD metabolic process"/>
    <property type="evidence" value="ECO:0007669"/>
    <property type="project" value="InterPro"/>
</dbReference>
<dbReference type="GO" id="GO:0006741">
    <property type="term" value="P:NADP biosynthetic process"/>
    <property type="evidence" value="ECO:0007669"/>
    <property type="project" value="UniProtKB-UniRule"/>
</dbReference>
<dbReference type="FunFam" id="2.60.200.30:FF:000009">
    <property type="entry name" value="Poly(P)/ATP NAD kinase"/>
    <property type="match status" value="1"/>
</dbReference>
<dbReference type="Gene3D" id="3.40.50.10330">
    <property type="entry name" value="Probable inorganic polyphosphate/atp-NAD kinase, domain 1"/>
    <property type="match status" value="1"/>
</dbReference>
<dbReference type="Gene3D" id="2.60.200.30">
    <property type="entry name" value="Probable inorganic polyphosphate/atp-NAD kinase, domain 2"/>
    <property type="match status" value="1"/>
</dbReference>
<dbReference type="HAMAP" id="MF_00361">
    <property type="entry name" value="NAD_kinase"/>
    <property type="match status" value="1"/>
</dbReference>
<dbReference type="InterPro" id="IPR017438">
    <property type="entry name" value="ATP-NAD_kinase_N"/>
</dbReference>
<dbReference type="InterPro" id="IPR017437">
    <property type="entry name" value="ATP-NAD_kinase_PpnK-typ_C"/>
</dbReference>
<dbReference type="InterPro" id="IPR016064">
    <property type="entry name" value="NAD/diacylglycerol_kinase_sf"/>
</dbReference>
<dbReference type="InterPro" id="IPR002504">
    <property type="entry name" value="NADK"/>
</dbReference>
<dbReference type="PANTHER" id="PTHR20275">
    <property type="entry name" value="NAD KINASE"/>
    <property type="match status" value="1"/>
</dbReference>
<dbReference type="PANTHER" id="PTHR20275:SF0">
    <property type="entry name" value="NAD KINASE"/>
    <property type="match status" value="1"/>
</dbReference>
<dbReference type="Pfam" id="PF01513">
    <property type="entry name" value="NAD_kinase"/>
    <property type="match status" value="1"/>
</dbReference>
<dbReference type="Pfam" id="PF20143">
    <property type="entry name" value="NAD_kinase_C"/>
    <property type="match status" value="1"/>
</dbReference>
<dbReference type="SUPFAM" id="SSF111331">
    <property type="entry name" value="NAD kinase/diacylglycerol kinase-like"/>
    <property type="match status" value="1"/>
</dbReference>
<protein>
    <recommendedName>
        <fullName evidence="1">NAD kinase</fullName>
        <ecNumber evidence="1">2.7.1.23</ecNumber>
    </recommendedName>
    <alternativeName>
        <fullName evidence="1">ATP-dependent NAD kinase</fullName>
    </alternativeName>
</protein>
<comment type="function">
    <text evidence="1">Involved in the regulation of the intracellular balance of NAD and NADP, and is a key enzyme in the biosynthesis of NADP. Catalyzes specifically the phosphorylation on 2'-hydroxyl of the adenosine moiety of NAD to yield NADP.</text>
</comment>
<comment type="catalytic activity">
    <reaction evidence="1">
        <text>NAD(+) + ATP = ADP + NADP(+) + H(+)</text>
        <dbReference type="Rhea" id="RHEA:18629"/>
        <dbReference type="ChEBI" id="CHEBI:15378"/>
        <dbReference type="ChEBI" id="CHEBI:30616"/>
        <dbReference type="ChEBI" id="CHEBI:57540"/>
        <dbReference type="ChEBI" id="CHEBI:58349"/>
        <dbReference type="ChEBI" id="CHEBI:456216"/>
        <dbReference type="EC" id="2.7.1.23"/>
    </reaction>
</comment>
<comment type="cofactor">
    <cofactor evidence="1">
        <name>a divalent metal cation</name>
        <dbReference type="ChEBI" id="CHEBI:60240"/>
    </cofactor>
</comment>
<comment type="subcellular location">
    <subcellularLocation>
        <location evidence="1">Cytoplasm</location>
    </subcellularLocation>
</comment>
<comment type="similarity">
    <text evidence="1">Belongs to the NAD kinase family.</text>
</comment>
<feature type="chain" id="PRO_1000133573" description="NAD kinase">
    <location>
        <begin position="1"/>
        <end position="284"/>
    </location>
</feature>
<feature type="active site" description="Proton acceptor" evidence="1">
    <location>
        <position position="67"/>
    </location>
</feature>
<feature type="binding site" evidence="1">
    <location>
        <begin position="67"/>
        <end position="68"/>
    </location>
    <ligand>
        <name>NAD(+)</name>
        <dbReference type="ChEBI" id="CHEBI:57540"/>
    </ligand>
</feature>
<feature type="binding site" evidence="1">
    <location>
        <begin position="141"/>
        <end position="142"/>
    </location>
    <ligand>
        <name>NAD(+)</name>
        <dbReference type="ChEBI" id="CHEBI:57540"/>
    </ligand>
</feature>
<feature type="binding site" evidence="1">
    <location>
        <position position="152"/>
    </location>
    <ligand>
        <name>NAD(+)</name>
        <dbReference type="ChEBI" id="CHEBI:57540"/>
    </ligand>
</feature>
<feature type="binding site" evidence="1">
    <location>
        <position position="169"/>
    </location>
    <ligand>
        <name>NAD(+)</name>
        <dbReference type="ChEBI" id="CHEBI:57540"/>
    </ligand>
</feature>
<feature type="binding site" evidence="1">
    <location>
        <position position="171"/>
    </location>
    <ligand>
        <name>NAD(+)</name>
        <dbReference type="ChEBI" id="CHEBI:57540"/>
    </ligand>
</feature>
<feature type="binding site" evidence="1">
    <location>
        <begin position="182"/>
        <end position="187"/>
    </location>
    <ligand>
        <name>NAD(+)</name>
        <dbReference type="ChEBI" id="CHEBI:57540"/>
    </ligand>
</feature>
<feature type="binding site" evidence="1">
    <location>
        <position position="241"/>
    </location>
    <ligand>
        <name>NAD(+)</name>
        <dbReference type="ChEBI" id="CHEBI:57540"/>
    </ligand>
</feature>
<accession>B9M5P5</accession>
<organism>
    <name type="scientific">Geotalea daltonii (strain DSM 22248 / JCM 15807 / FRC-32)</name>
    <name type="common">Geobacter daltonii</name>
    <dbReference type="NCBI Taxonomy" id="316067"/>
    <lineage>
        <taxon>Bacteria</taxon>
        <taxon>Pseudomonadati</taxon>
        <taxon>Thermodesulfobacteriota</taxon>
        <taxon>Desulfuromonadia</taxon>
        <taxon>Geobacterales</taxon>
        <taxon>Geobacteraceae</taxon>
        <taxon>Geotalea</taxon>
    </lineage>
</organism>
<name>NADK_GEODF</name>
<reference key="1">
    <citation type="submission" date="2009-01" db="EMBL/GenBank/DDBJ databases">
        <title>Complete sequence of Geobacter sp. FRC-32.</title>
        <authorList>
            <consortium name="US DOE Joint Genome Institute"/>
            <person name="Lucas S."/>
            <person name="Copeland A."/>
            <person name="Lapidus A."/>
            <person name="Glavina del Rio T."/>
            <person name="Dalin E."/>
            <person name="Tice H."/>
            <person name="Bruce D."/>
            <person name="Goodwin L."/>
            <person name="Pitluck S."/>
            <person name="Saunders E."/>
            <person name="Brettin T."/>
            <person name="Detter J.C."/>
            <person name="Han C."/>
            <person name="Larimer F."/>
            <person name="Land M."/>
            <person name="Hauser L."/>
            <person name="Kyrpides N."/>
            <person name="Ovchinnikova G."/>
            <person name="Kostka J."/>
            <person name="Richardson P."/>
        </authorList>
    </citation>
    <scope>NUCLEOTIDE SEQUENCE [LARGE SCALE GENOMIC DNA]</scope>
    <source>
        <strain>DSM 22248 / JCM 15807 / FRC-32</strain>
    </source>
</reference>
<evidence type="ECO:0000255" key="1">
    <source>
        <dbReference type="HAMAP-Rule" id="MF_00361"/>
    </source>
</evidence>
<keyword id="KW-0067">ATP-binding</keyword>
<keyword id="KW-0963">Cytoplasm</keyword>
<keyword id="KW-0418">Kinase</keyword>
<keyword id="KW-0520">NAD</keyword>
<keyword id="KW-0521">NADP</keyword>
<keyword id="KW-0547">Nucleotide-binding</keyword>
<keyword id="KW-1185">Reference proteome</keyword>
<keyword id="KW-0808">Transferase</keyword>
<gene>
    <name evidence="1" type="primary">nadK</name>
    <name type="ordered locus">Geob_3461</name>
</gene>
<proteinExistence type="inferred from homology"/>